<proteinExistence type="inferred from homology"/>
<comment type="function">
    <text evidence="1">Converts heme B (protoheme IX) to heme O by substitution of the vinyl group on carbon 2 of heme B porphyrin ring with a hydroxyethyl farnesyl side group.</text>
</comment>
<comment type="catalytic activity">
    <reaction evidence="1">
        <text>heme b + (2E,6E)-farnesyl diphosphate + H2O = Fe(II)-heme o + diphosphate</text>
        <dbReference type="Rhea" id="RHEA:28070"/>
        <dbReference type="ChEBI" id="CHEBI:15377"/>
        <dbReference type="ChEBI" id="CHEBI:33019"/>
        <dbReference type="ChEBI" id="CHEBI:60344"/>
        <dbReference type="ChEBI" id="CHEBI:60530"/>
        <dbReference type="ChEBI" id="CHEBI:175763"/>
        <dbReference type="EC" id="2.5.1.141"/>
    </reaction>
</comment>
<comment type="pathway">
    <text evidence="1">Porphyrin-containing compound metabolism; heme O biosynthesis; heme O from protoheme: step 1/1.</text>
</comment>
<comment type="subunit">
    <text evidence="1">Interacts with CtaA.</text>
</comment>
<comment type="subcellular location">
    <subcellularLocation>
        <location evidence="1">Cell membrane</location>
        <topology evidence="1">Multi-pass membrane protein</topology>
    </subcellularLocation>
</comment>
<comment type="miscellaneous">
    <text evidence="1">Carbon 2 of the heme B porphyrin ring is defined according to the Fischer nomenclature.</text>
</comment>
<comment type="similarity">
    <text evidence="1">Belongs to the UbiA prenyltransferase family. Protoheme IX farnesyltransferase subfamily.</text>
</comment>
<comment type="sequence caution" evidence="2">
    <conflict type="erroneous initiation">
        <sequence resource="EMBL-CDS" id="BAB42213"/>
    </conflict>
</comment>
<sequence>MSKEHTLSQNISRVNFKELQQIIKMGLVQGNLIPAFAGAWLAVVMTNHSFLSSIPQILLMLFGSTLIMGGACALNNYYDQDIDRIMPSKQNRPTVNNRITDQNLLLLSFGMMLVGEICLFLLNIPSGVLGLMGIVGYVSYYSIWSKRHTTWNTVIGSFPGAVPPLIGWVAIEGQISLTAIALFLVVFCWQPIHFYALAIKRKDEYALANIPMLPSVKGFKRTRVSMFIWLIILLPVPLLLINLGVVFVVLATLLNLGWIALGLTTFKKNSDQTKWATQMFIYSLNYLVIFFVLAVIVSLLTLI</sequence>
<dbReference type="EC" id="2.5.1.141" evidence="1"/>
<dbReference type="EMBL" id="BA000018">
    <property type="protein sequence ID" value="BAB42213.1"/>
    <property type="status" value="ALT_INIT"/>
    <property type="molecule type" value="Genomic_DNA"/>
</dbReference>
<dbReference type="PIR" id="A89882">
    <property type="entry name" value="A89882"/>
</dbReference>
<dbReference type="SMR" id="Q7A664"/>
<dbReference type="EnsemblBacteria" id="BAB42213">
    <property type="protein sequence ID" value="BAB42213"/>
    <property type="gene ID" value="BAB42213"/>
</dbReference>
<dbReference type="KEGG" id="sau:SA0965"/>
<dbReference type="HOGENOM" id="CLU_029631_0_0_9"/>
<dbReference type="UniPathway" id="UPA00834">
    <property type="reaction ID" value="UER00712"/>
</dbReference>
<dbReference type="GO" id="GO:0005886">
    <property type="term" value="C:plasma membrane"/>
    <property type="evidence" value="ECO:0007669"/>
    <property type="project" value="UniProtKB-SubCell"/>
</dbReference>
<dbReference type="GO" id="GO:0008495">
    <property type="term" value="F:protoheme IX farnesyltransferase activity"/>
    <property type="evidence" value="ECO:0007669"/>
    <property type="project" value="UniProtKB-UniRule"/>
</dbReference>
<dbReference type="GO" id="GO:0048034">
    <property type="term" value="P:heme O biosynthetic process"/>
    <property type="evidence" value="ECO:0007669"/>
    <property type="project" value="UniProtKB-UniRule"/>
</dbReference>
<dbReference type="CDD" id="cd13957">
    <property type="entry name" value="PT_UbiA_Cox10"/>
    <property type="match status" value="1"/>
</dbReference>
<dbReference type="Gene3D" id="1.10.357.140">
    <property type="entry name" value="UbiA prenyltransferase"/>
    <property type="match status" value="1"/>
</dbReference>
<dbReference type="HAMAP" id="MF_00154">
    <property type="entry name" value="CyoE_CtaB"/>
    <property type="match status" value="1"/>
</dbReference>
<dbReference type="InterPro" id="IPR006369">
    <property type="entry name" value="Protohaem_IX_farnesylTrfase"/>
</dbReference>
<dbReference type="InterPro" id="IPR000537">
    <property type="entry name" value="UbiA_prenyltransferase"/>
</dbReference>
<dbReference type="InterPro" id="IPR044878">
    <property type="entry name" value="UbiA_sf"/>
</dbReference>
<dbReference type="NCBIfam" id="TIGR01473">
    <property type="entry name" value="cyoE_ctaB"/>
    <property type="match status" value="1"/>
</dbReference>
<dbReference type="PANTHER" id="PTHR43448">
    <property type="entry name" value="PROTOHEME IX FARNESYLTRANSFERASE, MITOCHONDRIAL"/>
    <property type="match status" value="1"/>
</dbReference>
<dbReference type="PANTHER" id="PTHR43448:SF2">
    <property type="entry name" value="PROTOHEME IX FARNESYLTRANSFERASE, MITOCHONDRIAL"/>
    <property type="match status" value="1"/>
</dbReference>
<dbReference type="Pfam" id="PF01040">
    <property type="entry name" value="UbiA"/>
    <property type="match status" value="1"/>
</dbReference>
<evidence type="ECO:0000255" key="1">
    <source>
        <dbReference type="HAMAP-Rule" id="MF_00154"/>
    </source>
</evidence>
<evidence type="ECO:0000305" key="2"/>
<feature type="chain" id="PRO_0000327161" description="Protoheme IX farnesyltransferase">
    <location>
        <begin position="1"/>
        <end position="303"/>
    </location>
</feature>
<feature type="transmembrane region" description="Helical" evidence="1">
    <location>
        <begin position="25"/>
        <end position="45"/>
    </location>
</feature>
<feature type="transmembrane region" description="Helical" evidence="1">
    <location>
        <begin position="54"/>
        <end position="74"/>
    </location>
</feature>
<feature type="transmembrane region" description="Helical" evidence="1">
    <location>
        <begin position="104"/>
        <end position="124"/>
    </location>
</feature>
<feature type="transmembrane region" description="Helical" evidence="1">
    <location>
        <begin position="125"/>
        <end position="145"/>
    </location>
</feature>
<feature type="transmembrane region" description="Helical" evidence="1">
    <location>
        <begin position="151"/>
        <end position="171"/>
    </location>
</feature>
<feature type="transmembrane region" description="Helical" evidence="1">
    <location>
        <begin position="179"/>
        <end position="199"/>
    </location>
</feature>
<feature type="transmembrane region" description="Helical" evidence="1">
    <location>
        <begin position="227"/>
        <end position="247"/>
    </location>
</feature>
<feature type="transmembrane region" description="Helical" evidence="1">
    <location>
        <begin position="248"/>
        <end position="268"/>
    </location>
</feature>
<feature type="transmembrane region" description="Helical" evidence="1">
    <location>
        <begin position="280"/>
        <end position="300"/>
    </location>
</feature>
<gene>
    <name evidence="1" type="primary">ctaB</name>
    <name type="ordered locus">SA0965</name>
</gene>
<keyword id="KW-1003">Cell membrane</keyword>
<keyword id="KW-0350">Heme biosynthesis</keyword>
<keyword id="KW-0472">Membrane</keyword>
<keyword id="KW-0808">Transferase</keyword>
<keyword id="KW-0812">Transmembrane</keyword>
<keyword id="KW-1133">Transmembrane helix</keyword>
<reference key="1">
    <citation type="journal article" date="2001" name="Lancet">
        <title>Whole genome sequencing of meticillin-resistant Staphylococcus aureus.</title>
        <authorList>
            <person name="Kuroda M."/>
            <person name="Ohta T."/>
            <person name="Uchiyama I."/>
            <person name="Baba T."/>
            <person name="Yuzawa H."/>
            <person name="Kobayashi I."/>
            <person name="Cui L."/>
            <person name="Oguchi A."/>
            <person name="Aoki K."/>
            <person name="Nagai Y."/>
            <person name="Lian J.-Q."/>
            <person name="Ito T."/>
            <person name="Kanamori M."/>
            <person name="Matsumaru H."/>
            <person name="Maruyama A."/>
            <person name="Murakami H."/>
            <person name="Hosoyama A."/>
            <person name="Mizutani-Ui Y."/>
            <person name="Takahashi N.K."/>
            <person name="Sawano T."/>
            <person name="Inoue R."/>
            <person name="Kaito C."/>
            <person name="Sekimizu K."/>
            <person name="Hirakawa H."/>
            <person name="Kuhara S."/>
            <person name="Goto S."/>
            <person name="Yabuzaki J."/>
            <person name="Kanehisa M."/>
            <person name="Yamashita A."/>
            <person name="Oshima K."/>
            <person name="Furuya K."/>
            <person name="Yoshino C."/>
            <person name="Shiba T."/>
            <person name="Hattori M."/>
            <person name="Ogasawara N."/>
            <person name="Hayashi H."/>
            <person name="Hiramatsu K."/>
        </authorList>
    </citation>
    <scope>NUCLEOTIDE SEQUENCE [LARGE SCALE GENOMIC DNA]</scope>
    <source>
        <strain>N315</strain>
    </source>
</reference>
<protein>
    <recommendedName>
        <fullName evidence="1">Protoheme IX farnesyltransferase</fullName>
        <ecNumber evidence="1">2.5.1.141</ecNumber>
    </recommendedName>
    <alternativeName>
        <fullName evidence="1">Heme B farnesyltransferase</fullName>
    </alternativeName>
    <alternativeName>
        <fullName evidence="1">Heme O synthase</fullName>
    </alternativeName>
</protein>
<name>COXX_STAAN</name>
<organism>
    <name type="scientific">Staphylococcus aureus (strain N315)</name>
    <dbReference type="NCBI Taxonomy" id="158879"/>
    <lineage>
        <taxon>Bacteria</taxon>
        <taxon>Bacillati</taxon>
        <taxon>Bacillota</taxon>
        <taxon>Bacilli</taxon>
        <taxon>Bacillales</taxon>
        <taxon>Staphylococcaceae</taxon>
        <taxon>Staphylococcus</taxon>
    </lineage>
</organism>
<accession>Q7A664</accession>